<dbReference type="EC" id="5.4.99.12" evidence="1"/>
<dbReference type="EMBL" id="CP000830">
    <property type="protein sequence ID" value="ABV93679.1"/>
    <property type="molecule type" value="Genomic_DNA"/>
</dbReference>
<dbReference type="RefSeq" id="WP_012178608.1">
    <property type="nucleotide sequence ID" value="NC_009952.1"/>
</dbReference>
<dbReference type="SMR" id="A8LNZ7"/>
<dbReference type="STRING" id="398580.Dshi_1938"/>
<dbReference type="KEGG" id="dsh:Dshi_1938"/>
<dbReference type="eggNOG" id="COG0101">
    <property type="taxonomic scope" value="Bacteria"/>
</dbReference>
<dbReference type="HOGENOM" id="CLU_014673_0_2_5"/>
<dbReference type="OrthoDB" id="9811823at2"/>
<dbReference type="Proteomes" id="UP000006833">
    <property type="component" value="Chromosome"/>
</dbReference>
<dbReference type="GO" id="GO:0003723">
    <property type="term" value="F:RNA binding"/>
    <property type="evidence" value="ECO:0007669"/>
    <property type="project" value="InterPro"/>
</dbReference>
<dbReference type="GO" id="GO:0160147">
    <property type="term" value="F:tRNA pseudouridine(38-40) synthase activity"/>
    <property type="evidence" value="ECO:0007669"/>
    <property type="project" value="UniProtKB-EC"/>
</dbReference>
<dbReference type="GO" id="GO:0031119">
    <property type="term" value="P:tRNA pseudouridine synthesis"/>
    <property type="evidence" value="ECO:0007669"/>
    <property type="project" value="UniProtKB-UniRule"/>
</dbReference>
<dbReference type="CDD" id="cd02570">
    <property type="entry name" value="PseudoU_synth_EcTruA"/>
    <property type="match status" value="1"/>
</dbReference>
<dbReference type="FunFam" id="3.30.70.580:FF:000001">
    <property type="entry name" value="tRNA pseudouridine synthase A"/>
    <property type="match status" value="1"/>
</dbReference>
<dbReference type="Gene3D" id="3.30.70.660">
    <property type="entry name" value="Pseudouridine synthase I, catalytic domain, C-terminal subdomain"/>
    <property type="match status" value="1"/>
</dbReference>
<dbReference type="Gene3D" id="3.30.70.580">
    <property type="entry name" value="Pseudouridine synthase I, catalytic domain, N-terminal subdomain"/>
    <property type="match status" value="1"/>
</dbReference>
<dbReference type="HAMAP" id="MF_00171">
    <property type="entry name" value="TruA"/>
    <property type="match status" value="1"/>
</dbReference>
<dbReference type="InterPro" id="IPR020103">
    <property type="entry name" value="PsdUridine_synth_cat_dom_sf"/>
</dbReference>
<dbReference type="InterPro" id="IPR001406">
    <property type="entry name" value="PsdUridine_synth_TruA"/>
</dbReference>
<dbReference type="InterPro" id="IPR020097">
    <property type="entry name" value="PsdUridine_synth_TruA_a/b_dom"/>
</dbReference>
<dbReference type="InterPro" id="IPR020095">
    <property type="entry name" value="PsdUridine_synth_TruA_C"/>
</dbReference>
<dbReference type="InterPro" id="IPR020094">
    <property type="entry name" value="TruA/RsuA/RluB/E/F_N"/>
</dbReference>
<dbReference type="NCBIfam" id="TIGR00071">
    <property type="entry name" value="hisT_truA"/>
    <property type="match status" value="1"/>
</dbReference>
<dbReference type="PANTHER" id="PTHR11142">
    <property type="entry name" value="PSEUDOURIDYLATE SYNTHASE"/>
    <property type="match status" value="1"/>
</dbReference>
<dbReference type="PANTHER" id="PTHR11142:SF0">
    <property type="entry name" value="TRNA PSEUDOURIDINE SYNTHASE-LIKE 1"/>
    <property type="match status" value="1"/>
</dbReference>
<dbReference type="Pfam" id="PF01416">
    <property type="entry name" value="PseudoU_synth_1"/>
    <property type="match status" value="2"/>
</dbReference>
<dbReference type="PIRSF" id="PIRSF001430">
    <property type="entry name" value="tRNA_psdUrid_synth"/>
    <property type="match status" value="1"/>
</dbReference>
<dbReference type="SUPFAM" id="SSF55120">
    <property type="entry name" value="Pseudouridine synthase"/>
    <property type="match status" value="1"/>
</dbReference>
<gene>
    <name evidence="1" type="primary">truA</name>
    <name type="ordered locus">Dshi_1938</name>
</gene>
<reference key="1">
    <citation type="journal article" date="2010" name="ISME J.">
        <title>The complete genome sequence of the algal symbiont Dinoroseobacter shibae: a hitchhiker's guide to life in the sea.</title>
        <authorList>
            <person name="Wagner-Dobler I."/>
            <person name="Ballhausen B."/>
            <person name="Berger M."/>
            <person name="Brinkhoff T."/>
            <person name="Buchholz I."/>
            <person name="Bunk B."/>
            <person name="Cypionka H."/>
            <person name="Daniel R."/>
            <person name="Drepper T."/>
            <person name="Gerdts G."/>
            <person name="Hahnke S."/>
            <person name="Han C."/>
            <person name="Jahn D."/>
            <person name="Kalhoefer D."/>
            <person name="Kiss H."/>
            <person name="Klenk H.P."/>
            <person name="Kyrpides N."/>
            <person name="Liebl W."/>
            <person name="Liesegang H."/>
            <person name="Meincke L."/>
            <person name="Pati A."/>
            <person name="Petersen J."/>
            <person name="Piekarski T."/>
            <person name="Pommerenke C."/>
            <person name="Pradella S."/>
            <person name="Pukall R."/>
            <person name="Rabus R."/>
            <person name="Stackebrandt E."/>
            <person name="Thole S."/>
            <person name="Thompson L."/>
            <person name="Tielen P."/>
            <person name="Tomasch J."/>
            <person name="von Jan M."/>
            <person name="Wanphrut N."/>
            <person name="Wichels A."/>
            <person name="Zech H."/>
            <person name="Simon M."/>
        </authorList>
    </citation>
    <scope>NUCLEOTIDE SEQUENCE [LARGE SCALE GENOMIC DNA]</scope>
    <source>
        <strain>DSM 16493 / NCIMB 14021 / DFL 12</strain>
    </source>
</reference>
<proteinExistence type="inferred from homology"/>
<evidence type="ECO:0000255" key="1">
    <source>
        <dbReference type="HAMAP-Rule" id="MF_00171"/>
    </source>
</evidence>
<accession>A8LNZ7</accession>
<organism>
    <name type="scientific">Dinoroseobacter shibae (strain DSM 16493 / NCIMB 14021 / DFL 12)</name>
    <dbReference type="NCBI Taxonomy" id="398580"/>
    <lineage>
        <taxon>Bacteria</taxon>
        <taxon>Pseudomonadati</taxon>
        <taxon>Pseudomonadota</taxon>
        <taxon>Alphaproteobacteria</taxon>
        <taxon>Rhodobacterales</taxon>
        <taxon>Roseobacteraceae</taxon>
        <taxon>Dinoroseobacter</taxon>
    </lineage>
</organism>
<comment type="function">
    <text evidence="1">Formation of pseudouridine at positions 38, 39 and 40 in the anticodon stem and loop of transfer RNAs.</text>
</comment>
<comment type="catalytic activity">
    <reaction evidence="1">
        <text>uridine(38/39/40) in tRNA = pseudouridine(38/39/40) in tRNA</text>
        <dbReference type="Rhea" id="RHEA:22376"/>
        <dbReference type="Rhea" id="RHEA-COMP:10085"/>
        <dbReference type="Rhea" id="RHEA-COMP:10087"/>
        <dbReference type="ChEBI" id="CHEBI:65314"/>
        <dbReference type="ChEBI" id="CHEBI:65315"/>
        <dbReference type="EC" id="5.4.99.12"/>
    </reaction>
</comment>
<comment type="subunit">
    <text evidence="1">Homodimer.</text>
</comment>
<comment type="similarity">
    <text evidence="1">Belongs to the tRNA pseudouridine synthase TruA family.</text>
</comment>
<sequence length="257" mass="28296">MPRFALKIEYDGAPFAGWQRQREQPSVQGAVEAALRGLQPDHAGIAAAGRTDAGVHALGQVAHVDLARDWDPFRLSEALNAHLRPAPVAVLAAARVGEDFHARFSALERSYLFRLLVRRAPATHDAGLVWRVMNPLDVEAMREGAKYLIGKHDFTTFRSTMCQAASPVKTLDEITIEESPRDAGTEFRFHLRARSFLHNQVRSIVGTLERVGAGAWDPADVKTALEARDRAACGPVCAPQGLYLRAVRYPEDPFKPA</sequence>
<keyword id="KW-0413">Isomerase</keyword>
<keyword id="KW-1185">Reference proteome</keyword>
<keyword id="KW-0819">tRNA processing</keyword>
<feature type="chain" id="PRO_1000077088" description="tRNA pseudouridine synthase A">
    <location>
        <begin position="1"/>
        <end position="257"/>
    </location>
</feature>
<feature type="active site" description="Nucleophile" evidence="1">
    <location>
        <position position="52"/>
    </location>
</feature>
<feature type="binding site" evidence="1">
    <location>
        <position position="111"/>
    </location>
    <ligand>
        <name>substrate</name>
    </ligand>
</feature>
<protein>
    <recommendedName>
        <fullName evidence="1">tRNA pseudouridine synthase A</fullName>
        <ecNumber evidence="1">5.4.99.12</ecNumber>
    </recommendedName>
    <alternativeName>
        <fullName evidence="1">tRNA pseudouridine(38-40) synthase</fullName>
    </alternativeName>
    <alternativeName>
        <fullName evidence="1">tRNA pseudouridylate synthase I</fullName>
    </alternativeName>
    <alternativeName>
        <fullName evidence="1">tRNA-uridine isomerase I</fullName>
    </alternativeName>
</protein>
<name>TRUA_DINSH</name>